<dbReference type="EC" id="2.8.1.10" evidence="1"/>
<dbReference type="EMBL" id="CP001101">
    <property type="protein sequence ID" value="ACE04479.1"/>
    <property type="molecule type" value="Genomic_DNA"/>
</dbReference>
<dbReference type="SMR" id="B3EK52"/>
<dbReference type="STRING" id="331678.Cphamn1_1556"/>
<dbReference type="KEGG" id="cpb:Cphamn1_1556"/>
<dbReference type="eggNOG" id="COG2022">
    <property type="taxonomic scope" value="Bacteria"/>
</dbReference>
<dbReference type="HOGENOM" id="CLU_062233_1_0_10"/>
<dbReference type="OrthoDB" id="9805935at2"/>
<dbReference type="UniPathway" id="UPA00060"/>
<dbReference type="GO" id="GO:0005737">
    <property type="term" value="C:cytoplasm"/>
    <property type="evidence" value="ECO:0007669"/>
    <property type="project" value="UniProtKB-SubCell"/>
</dbReference>
<dbReference type="GO" id="GO:1990107">
    <property type="term" value="F:thiazole synthase activity"/>
    <property type="evidence" value="ECO:0007669"/>
    <property type="project" value="UniProtKB-EC"/>
</dbReference>
<dbReference type="GO" id="GO:0009229">
    <property type="term" value="P:thiamine diphosphate biosynthetic process"/>
    <property type="evidence" value="ECO:0007669"/>
    <property type="project" value="UniProtKB-UniRule"/>
</dbReference>
<dbReference type="CDD" id="cd04728">
    <property type="entry name" value="ThiG"/>
    <property type="match status" value="1"/>
</dbReference>
<dbReference type="Gene3D" id="3.20.20.70">
    <property type="entry name" value="Aldolase class I"/>
    <property type="match status" value="1"/>
</dbReference>
<dbReference type="HAMAP" id="MF_00443">
    <property type="entry name" value="ThiG"/>
    <property type="match status" value="1"/>
</dbReference>
<dbReference type="InterPro" id="IPR013785">
    <property type="entry name" value="Aldolase_TIM"/>
</dbReference>
<dbReference type="InterPro" id="IPR033983">
    <property type="entry name" value="Thiazole_synthase_ThiG"/>
</dbReference>
<dbReference type="InterPro" id="IPR008867">
    <property type="entry name" value="ThiG"/>
</dbReference>
<dbReference type="PANTHER" id="PTHR34266">
    <property type="entry name" value="THIAZOLE SYNTHASE"/>
    <property type="match status" value="1"/>
</dbReference>
<dbReference type="PANTHER" id="PTHR34266:SF2">
    <property type="entry name" value="THIAZOLE SYNTHASE"/>
    <property type="match status" value="1"/>
</dbReference>
<dbReference type="Pfam" id="PF05690">
    <property type="entry name" value="ThiG"/>
    <property type="match status" value="1"/>
</dbReference>
<dbReference type="SUPFAM" id="SSF110399">
    <property type="entry name" value="ThiG-like"/>
    <property type="match status" value="1"/>
</dbReference>
<evidence type="ECO:0000255" key="1">
    <source>
        <dbReference type="HAMAP-Rule" id="MF_00443"/>
    </source>
</evidence>
<gene>
    <name evidence="1" type="primary">thiG</name>
    <name type="ordered locus">Cphamn1_1556</name>
</gene>
<reference key="1">
    <citation type="submission" date="2008-06" db="EMBL/GenBank/DDBJ databases">
        <title>Complete sequence of Chlorobium phaeobacteroides BS1.</title>
        <authorList>
            <consortium name="US DOE Joint Genome Institute"/>
            <person name="Lucas S."/>
            <person name="Copeland A."/>
            <person name="Lapidus A."/>
            <person name="Glavina del Rio T."/>
            <person name="Dalin E."/>
            <person name="Tice H."/>
            <person name="Bruce D."/>
            <person name="Goodwin L."/>
            <person name="Pitluck S."/>
            <person name="Schmutz J."/>
            <person name="Larimer F."/>
            <person name="Land M."/>
            <person name="Hauser L."/>
            <person name="Kyrpides N."/>
            <person name="Ovchinnikova G."/>
            <person name="Li T."/>
            <person name="Liu Z."/>
            <person name="Zhao F."/>
            <person name="Overmann J."/>
            <person name="Bryant D.A."/>
            <person name="Richardson P."/>
        </authorList>
    </citation>
    <scope>NUCLEOTIDE SEQUENCE [LARGE SCALE GENOMIC DNA]</scope>
    <source>
        <strain>BS1</strain>
    </source>
</reference>
<feature type="chain" id="PRO_1000124614" description="Thiazole synthase">
    <location>
        <begin position="1"/>
        <end position="259"/>
    </location>
</feature>
<feature type="active site" description="Schiff-base intermediate with DXP" evidence="1">
    <location>
        <position position="98"/>
    </location>
</feature>
<feature type="binding site" evidence="1">
    <location>
        <position position="159"/>
    </location>
    <ligand>
        <name>1-deoxy-D-xylulose 5-phosphate</name>
        <dbReference type="ChEBI" id="CHEBI:57792"/>
    </ligand>
</feature>
<feature type="binding site" evidence="1">
    <location>
        <begin position="185"/>
        <end position="186"/>
    </location>
    <ligand>
        <name>1-deoxy-D-xylulose 5-phosphate</name>
        <dbReference type="ChEBI" id="CHEBI:57792"/>
    </ligand>
</feature>
<feature type="binding site" evidence="1">
    <location>
        <begin position="207"/>
        <end position="208"/>
    </location>
    <ligand>
        <name>1-deoxy-D-xylulose 5-phosphate</name>
        <dbReference type="ChEBI" id="CHEBI:57792"/>
    </ligand>
</feature>
<organism>
    <name type="scientific">Chlorobium phaeobacteroides (strain BS1)</name>
    <dbReference type="NCBI Taxonomy" id="331678"/>
    <lineage>
        <taxon>Bacteria</taxon>
        <taxon>Pseudomonadati</taxon>
        <taxon>Chlorobiota</taxon>
        <taxon>Chlorobiia</taxon>
        <taxon>Chlorobiales</taxon>
        <taxon>Chlorobiaceae</taxon>
        <taxon>Chlorobium/Pelodictyon group</taxon>
        <taxon>Chlorobium</taxon>
    </lineage>
</organism>
<keyword id="KW-0963">Cytoplasm</keyword>
<keyword id="KW-0704">Schiff base</keyword>
<keyword id="KW-0784">Thiamine biosynthesis</keyword>
<keyword id="KW-0808">Transferase</keyword>
<proteinExistence type="inferred from homology"/>
<comment type="function">
    <text evidence="1">Catalyzes the rearrangement of 1-deoxy-D-xylulose 5-phosphate (DXP) to produce the thiazole phosphate moiety of thiamine. Sulfur is provided by the thiocarboxylate moiety of the carrier protein ThiS. In vitro, sulfur can be provided by H(2)S.</text>
</comment>
<comment type="catalytic activity">
    <reaction evidence="1">
        <text>[ThiS sulfur-carrier protein]-C-terminal-Gly-aminoethanethioate + 2-iminoacetate + 1-deoxy-D-xylulose 5-phosphate = [ThiS sulfur-carrier protein]-C-terminal Gly-Gly + 2-[(2R,5Z)-2-carboxy-4-methylthiazol-5(2H)-ylidene]ethyl phosphate + 2 H2O + H(+)</text>
        <dbReference type="Rhea" id="RHEA:26297"/>
        <dbReference type="Rhea" id="RHEA-COMP:12909"/>
        <dbReference type="Rhea" id="RHEA-COMP:19908"/>
        <dbReference type="ChEBI" id="CHEBI:15377"/>
        <dbReference type="ChEBI" id="CHEBI:15378"/>
        <dbReference type="ChEBI" id="CHEBI:57792"/>
        <dbReference type="ChEBI" id="CHEBI:62899"/>
        <dbReference type="ChEBI" id="CHEBI:77846"/>
        <dbReference type="ChEBI" id="CHEBI:90778"/>
        <dbReference type="ChEBI" id="CHEBI:232372"/>
        <dbReference type="EC" id="2.8.1.10"/>
    </reaction>
</comment>
<comment type="pathway">
    <text evidence="1">Cofactor biosynthesis; thiamine diphosphate biosynthesis.</text>
</comment>
<comment type="subunit">
    <text evidence="1">Homotetramer. Forms heterodimers with either ThiH or ThiS.</text>
</comment>
<comment type="subcellular location">
    <subcellularLocation>
        <location evidence="1">Cytoplasm</location>
    </subcellularLocation>
</comment>
<comment type="similarity">
    <text evidence="1">Belongs to the ThiG family.</text>
</comment>
<protein>
    <recommendedName>
        <fullName evidence="1">Thiazole synthase</fullName>
        <ecNumber evidence="1">2.8.1.10</ecNumber>
    </recommendedName>
</protein>
<accession>B3EK52</accession>
<name>THIG_CHLPB</name>
<sequence length="259" mass="27011">MDLVQIGSYTFSSRLILGTGKFGNTASMVDAVRASGTELVTVALRRFNREETDHDLFTTLADLDGITLMPNTSGASNAKEAVRAAHISRELSGSPFIKVEIHPNPQHLMPDPIETYEACKILAGEGFLVMPYIPADPVLAKRLEDVGCASVMPLGSSIGSGQGLATAGMIRLIIRESTIPVIVDAGLRSPSEACAAMEMGCTAVLVNSAIAVAQNPPEMAAAFAEAVQAGYRAKAAGIMPKSGSAIATSPLTSFLDTTS</sequence>